<protein>
    <recommendedName>
        <fullName evidence="1">Large ribosomal subunit protein uL16c</fullName>
    </recommendedName>
    <alternativeName>
        <fullName evidence="2">50S ribosomal protein L16, chloroplastic</fullName>
    </alternativeName>
</protein>
<keyword id="KW-0150">Chloroplast</keyword>
<keyword id="KW-0934">Plastid</keyword>
<keyword id="KW-1185">Reference proteome</keyword>
<keyword id="KW-0687">Ribonucleoprotein</keyword>
<keyword id="KW-0689">Ribosomal protein</keyword>
<proteinExistence type="inferred from homology"/>
<feature type="chain" id="PRO_0000062289" description="Large ribosomal subunit protein uL16c">
    <location>
        <begin position="1"/>
        <end position="136"/>
    </location>
</feature>
<accession>P08528</accession>
<organism>
    <name type="scientific">Zea mays</name>
    <name type="common">Maize</name>
    <dbReference type="NCBI Taxonomy" id="4577"/>
    <lineage>
        <taxon>Eukaryota</taxon>
        <taxon>Viridiplantae</taxon>
        <taxon>Streptophyta</taxon>
        <taxon>Embryophyta</taxon>
        <taxon>Tracheophyta</taxon>
        <taxon>Spermatophyta</taxon>
        <taxon>Magnoliopsida</taxon>
        <taxon>Liliopsida</taxon>
        <taxon>Poales</taxon>
        <taxon>Poaceae</taxon>
        <taxon>PACMAD clade</taxon>
        <taxon>Panicoideae</taxon>
        <taxon>Andropogonodae</taxon>
        <taxon>Andropogoneae</taxon>
        <taxon>Tripsacinae</taxon>
        <taxon>Zea</taxon>
    </lineage>
</organism>
<reference key="1">
    <citation type="journal article" date="1995" name="J. Mol. Biol.">
        <title>Complete sequence of the maize chloroplast genome: gene content, hotspots of divergence and fine tuning of genetic information by transcript editing.</title>
        <authorList>
            <person name="Maier R.M."/>
            <person name="Neckermann K."/>
            <person name="Igloi G.L."/>
            <person name="Koessel H."/>
        </authorList>
    </citation>
    <scope>NUCLEOTIDE SEQUENCE [LARGE SCALE GENOMIC DNA]</scope>
    <source>
        <strain>cv. B73</strain>
    </source>
</reference>
<reference key="2">
    <citation type="journal article" date="1987" name="Proc. Natl. Acad. Sci. U.S.A.">
        <title>Nucleotide sequence of a preferred maize chloroplast genome template for in vitro DNA synthesis.</title>
        <authorList>
            <person name="Gold B."/>
            <person name="Carrillo N."/>
            <person name="Tewari K.K."/>
            <person name="Bogorad L."/>
        </authorList>
    </citation>
    <scope>NUCLEOTIDE SEQUENCE [GENOMIC DNA] OF 4-136</scope>
</reference>
<reference key="3">
    <citation type="journal article" date="1988" name="Eur. J. Biochem.">
        <title>Nucleotide sequence and linkage map position of the genes for ribosomal proteins L14 and S8 in the maize chloroplast genome.</title>
        <authorList>
            <person name="Markmann-Mulisch U."/>
            <person name="Subramanian A.R."/>
        </authorList>
    </citation>
    <scope>NUCLEOTIDE SEQUENCE [GENOMIC DNA] OF 88-136</scope>
</reference>
<comment type="subunit">
    <text>Part of the 50S ribosomal subunit.</text>
</comment>
<comment type="subcellular location">
    <subcellularLocation>
        <location>Plastid</location>
        <location>Chloroplast</location>
    </subcellularLocation>
</comment>
<comment type="similarity">
    <text evidence="1">Belongs to the universal ribosomal protein uL16 family.</text>
</comment>
<comment type="sequence caution" evidence="2">
    <conflict type="erroneous initiation">
        <sequence resource="EMBL-CDS" id="AAA84482"/>
    </conflict>
</comment>
<geneLocation type="chloroplast"/>
<gene>
    <name evidence="1" type="primary">rpl16</name>
</gene>
<name>RK16_MAIZE</name>
<dbReference type="EMBL" id="X86563">
    <property type="protein sequence ID" value="CAA60323.1"/>
    <property type="molecule type" value="Genomic_DNA"/>
</dbReference>
<dbReference type="EMBL" id="M15176">
    <property type="protein sequence ID" value="AAA84482.1"/>
    <property type="status" value="ALT_INIT"/>
    <property type="molecule type" value="Genomic_DNA"/>
</dbReference>
<dbReference type="EMBL" id="X06734">
    <property type="protein sequence ID" value="CAA29911.1"/>
    <property type="molecule type" value="Genomic_DNA"/>
</dbReference>
<dbReference type="PIR" id="S58589">
    <property type="entry name" value="S58589"/>
</dbReference>
<dbReference type="RefSeq" id="NP_043061.1">
    <property type="nucleotide sequence ID" value="NC_001666.2"/>
</dbReference>
<dbReference type="SMR" id="P08528"/>
<dbReference type="FunCoup" id="P08528">
    <property type="interactions" value="1195"/>
</dbReference>
<dbReference type="STRING" id="4577.P08528"/>
<dbReference type="PaxDb" id="4577-GRMZM5G853305_P01"/>
<dbReference type="GeneID" id="845214"/>
<dbReference type="KEGG" id="zma:845214"/>
<dbReference type="MaizeGDB" id="67057"/>
<dbReference type="eggNOG" id="KOG3422">
    <property type="taxonomic scope" value="Eukaryota"/>
</dbReference>
<dbReference type="InParanoid" id="P08528"/>
<dbReference type="OrthoDB" id="34872at2759"/>
<dbReference type="Proteomes" id="UP000007305">
    <property type="component" value="Chloroplast"/>
</dbReference>
<dbReference type="GO" id="GO:0009507">
    <property type="term" value="C:chloroplast"/>
    <property type="evidence" value="ECO:0007669"/>
    <property type="project" value="UniProtKB-SubCell"/>
</dbReference>
<dbReference type="GO" id="GO:0005762">
    <property type="term" value="C:mitochondrial large ribosomal subunit"/>
    <property type="evidence" value="ECO:0000318"/>
    <property type="project" value="GO_Central"/>
</dbReference>
<dbReference type="GO" id="GO:0019843">
    <property type="term" value="F:rRNA binding"/>
    <property type="evidence" value="ECO:0000318"/>
    <property type="project" value="GO_Central"/>
</dbReference>
<dbReference type="GO" id="GO:0003735">
    <property type="term" value="F:structural constituent of ribosome"/>
    <property type="evidence" value="ECO:0000318"/>
    <property type="project" value="GO_Central"/>
</dbReference>
<dbReference type="GO" id="GO:0032543">
    <property type="term" value="P:mitochondrial translation"/>
    <property type="evidence" value="ECO:0000318"/>
    <property type="project" value="GO_Central"/>
</dbReference>
<dbReference type="CDD" id="cd01433">
    <property type="entry name" value="Ribosomal_L16_L10e"/>
    <property type="match status" value="1"/>
</dbReference>
<dbReference type="FunFam" id="3.90.1170.10:FF:000001">
    <property type="entry name" value="50S ribosomal protein L16"/>
    <property type="match status" value="1"/>
</dbReference>
<dbReference type="Gene3D" id="3.90.1170.10">
    <property type="entry name" value="Ribosomal protein L10e/L16"/>
    <property type="match status" value="1"/>
</dbReference>
<dbReference type="HAMAP" id="MF_01342">
    <property type="entry name" value="Ribosomal_uL16"/>
    <property type="match status" value="1"/>
</dbReference>
<dbReference type="InterPro" id="IPR047873">
    <property type="entry name" value="Ribosomal_uL16"/>
</dbReference>
<dbReference type="InterPro" id="IPR000114">
    <property type="entry name" value="Ribosomal_uL16_bact-type"/>
</dbReference>
<dbReference type="InterPro" id="IPR020798">
    <property type="entry name" value="Ribosomal_uL16_CS"/>
</dbReference>
<dbReference type="InterPro" id="IPR016180">
    <property type="entry name" value="Ribosomal_uL16_dom"/>
</dbReference>
<dbReference type="InterPro" id="IPR036920">
    <property type="entry name" value="Ribosomal_uL16_sf"/>
</dbReference>
<dbReference type="NCBIfam" id="TIGR01164">
    <property type="entry name" value="rplP_bact"/>
    <property type="match status" value="1"/>
</dbReference>
<dbReference type="PANTHER" id="PTHR12220">
    <property type="entry name" value="50S/60S RIBOSOMAL PROTEIN L16"/>
    <property type="match status" value="1"/>
</dbReference>
<dbReference type="PANTHER" id="PTHR12220:SF13">
    <property type="entry name" value="LARGE RIBOSOMAL SUBUNIT PROTEIN UL16M"/>
    <property type="match status" value="1"/>
</dbReference>
<dbReference type="Pfam" id="PF00252">
    <property type="entry name" value="Ribosomal_L16"/>
    <property type="match status" value="1"/>
</dbReference>
<dbReference type="PRINTS" id="PR00060">
    <property type="entry name" value="RIBOSOMALL16"/>
</dbReference>
<dbReference type="SUPFAM" id="SSF54686">
    <property type="entry name" value="Ribosomal protein L16p/L10e"/>
    <property type="match status" value="1"/>
</dbReference>
<dbReference type="PROSITE" id="PS00586">
    <property type="entry name" value="RIBOSOMAL_L16_1"/>
    <property type="match status" value="1"/>
</dbReference>
<dbReference type="PROSITE" id="PS00701">
    <property type="entry name" value="RIBOSOMAL_L16_2"/>
    <property type="match status" value="1"/>
</dbReference>
<evidence type="ECO:0000255" key="1">
    <source>
        <dbReference type="HAMAP-Rule" id="MF_01342"/>
    </source>
</evidence>
<evidence type="ECO:0000305" key="2"/>
<sequence length="136" mass="15531">MLSPKRTRFRKQHRGRMKGKSCRGNHICFGRYALQVLEPAWITARQIEAGRRAMTRYARRGGKIWVRIFPDKPVTIRPTETRMGSGKGSPEYWVAVVKPGRILYEMSGVSETVARAAISIAASKMPIRSQFLRLEI</sequence>